<reference key="1">
    <citation type="submission" date="2006-08" db="EMBL/GenBank/DDBJ databases">
        <title>Complete sequence of chromosome 1 of Shewanella sp. MR-7.</title>
        <authorList>
            <person name="Copeland A."/>
            <person name="Lucas S."/>
            <person name="Lapidus A."/>
            <person name="Barry K."/>
            <person name="Detter J.C."/>
            <person name="Glavina del Rio T."/>
            <person name="Hammon N."/>
            <person name="Israni S."/>
            <person name="Dalin E."/>
            <person name="Tice H."/>
            <person name="Pitluck S."/>
            <person name="Kiss H."/>
            <person name="Brettin T."/>
            <person name="Bruce D."/>
            <person name="Han C."/>
            <person name="Tapia R."/>
            <person name="Gilna P."/>
            <person name="Schmutz J."/>
            <person name="Larimer F."/>
            <person name="Land M."/>
            <person name="Hauser L."/>
            <person name="Kyrpides N."/>
            <person name="Mikhailova N."/>
            <person name="Nealson K."/>
            <person name="Konstantinidis K."/>
            <person name="Klappenbach J."/>
            <person name="Tiedje J."/>
            <person name="Richardson P."/>
        </authorList>
    </citation>
    <scope>NUCLEOTIDE SEQUENCE [LARGE SCALE GENOMIC DNA]</scope>
    <source>
        <strain>MR-7</strain>
    </source>
</reference>
<feature type="chain" id="PRO_1000014019" description="Glucose-6-phosphate isomerase">
    <location>
        <begin position="1"/>
        <end position="545"/>
    </location>
</feature>
<feature type="active site" description="Proton donor" evidence="1">
    <location>
        <position position="351"/>
    </location>
</feature>
<feature type="active site" evidence="1">
    <location>
        <position position="382"/>
    </location>
</feature>
<feature type="active site" evidence="1">
    <location>
        <position position="510"/>
    </location>
</feature>
<proteinExistence type="inferred from homology"/>
<organism>
    <name type="scientific">Shewanella sp. (strain MR-7)</name>
    <dbReference type="NCBI Taxonomy" id="60481"/>
    <lineage>
        <taxon>Bacteria</taxon>
        <taxon>Pseudomonadati</taxon>
        <taxon>Pseudomonadota</taxon>
        <taxon>Gammaproteobacteria</taxon>
        <taxon>Alteromonadales</taxon>
        <taxon>Shewanellaceae</taxon>
        <taxon>Shewanella</taxon>
    </lineage>
</organism>
<comment type="function">
    <text evidence="1">Catalyzes the reversible isomerization of glucose-6-phosphate to fructose-6-phosphate.</text>
</comment>
<comment type="catalytic activity">
    <reaction evidence="1">
        <text>alpha-D-glucose 6-phosphate = beta-D-fructose 6-phosphate</text>
        <dbReference type="Rhea" id="RHEA:11816"/>
        <dbReference type="ChEBI" id="CHEBI:57634"/>
        <dbReference type="ChEBI" id="CHEBI:58225"/>
        <dbReference type="EC" id="5.3.1.9"/>
    </reaction>
</comment>
<comment type="pathway">
    <text evidence="1">Carbohydrate biosynthesis; gluconeogenesis.</text>
</comment>
<comment type="pathway">
    <text evidence="1">Carbohydrate degradation; glycolysis; D-glyceraldehyde 3-phosphate and glycerone phosphate from D-glucose: step 2/4.</text>
</comment>
<comment type="subcellular location">
    <subcellularLocation>
        <location evidence="1">Cytoplasm</location>
    </subcellularLocation>
</comment>
<comment type="similarity">
    <text evidence="1">Belongs to the GPI family.</text>
</comment>
<protein>
    <recommendedName>
        <fullName evidence="1">Glucose-6-phosphate isomerase</fullName>
        <shortName evidence="1">GPI</shortName>
        <ecNumber evidence="1">5.3.1.9</ecNumber>
    </recommendedName>
    <alternativeName>
        <fullName evidence="1">Phosphoglucose isomerase</fullName>
        <shortName evidence="1">PGI</shortName>
    </alternativeName>
    <alternativeName>
        <fullName evidence="1">Phosphohexose isomerase</fullName>
        <shortName evidence="1">PHI</shortName>
    </alternativeName>
</protein>
<name>G6PI_SHESR</name>
<keyword id="KW-0963">Cytoplasm</keyword>
<keyword id="KW-0312">Gluconeogenesis</keyword>
<keyword id="KW-0324">Glycolysis</keyword>
<keyword id="KW-0413">Isomerase</keyword>
<accession>Q0HS71</accession>
<evidence type="ECO:0000255" key="1">
    <source>
        <dbReference type="HAMAP-Rule" id="MF_00473"/>
    </source>
</evidence>
<dbReference type="EC" id="5.3.1.9" evidence="1"/>
<dbReference type="EMBL" id="CP000444">
    <property type="protein sequence ID" value="ABI44034.1"/>
    <property type="molecule type" value="Genomic_DNA"/>
</dbReference>
<dbReference type="SMR" id="Q0HS71"/>
<dbReference type="KEGG" id="shm:Shewmr7_3050"/>
<dbReference type="HOGENOM" id="CLU_017947_3_1_6"/>
<dbReference type="UniPathway" id="UPA00109">
    <property type="reaction ID" value="UER00181"/>
</dbReference>
<dbReference type="UniPathway" id="UPA00138"/>
<dbReference type="GO" id="GO:0005829">
    <property type="term" value="C:cytosol"/>
    <property type="evidence" value="ECO:0007669"/>
    <property type="project" value="TreeGrafter"/>
</dbReference>
<dbReference type="GO" id="GO:0097367">
    <property type="term" value="F:carbohydrate derivative binding"/>
    <property type="evidence" value="ECO:0007669"/>
    <property type="project" value="InterPro"/>
</dbReference>
<dbReference type="GO" id="GO:0004347">
    <property type="term" value="F:glucose-6-phosphate isomerase activity"/>
    <property type="evidence" value="ECO:0007669"/>
    <property type="project" value="UniProtKB-UniRule"/>
</dbReference>
<dbReference type="GO" id="GO:0048029">
    <property type="term" value="F:monosaccharide binding"/>
    <property type="evidence" value="ECO:0007669"/>
    <property type="project" value="TreeGrafter"/>
</dbReference>
<dbReference type="GO" id="GO:0006094">
    <property type="term" value="P:gluconeogenesis"/>
    <property type="evidence" value="ECO:0007669"/>
    <property type="project" value="UniProtKB-UniRule"/>
</dbReference>
<dbReference type="GO" id="GO:0051156">
    <property type="term" value="P:glucose 6-phosphate metabolic process"/>
    <property type="evidence" value="ECO:0007669"/>
    <property type="project" value="TreeGrafter"/>
</dbReference>
<dbReference type="GO" id="GO:0006096">
    <property type="term" value="P:glycolytic process"/>
    <property type="evidence" value="ECO:0007669"/>
    <property type="project" value="UniProtKB-UniRule"/>
</dbReference>
<dbReference type="CDD" id="cd05015">
    <property type="entry name" value="SIS_PGI_1"/>
    <property type="match status" value="1"/>
</dbReference>
<dbReference type="CDD" id="cd05016">
    <property type="entry name" value="SIS_PGI_2"/>
    <property type="match status" value="1"/>
</dbReference>
<dbReference type="FunFam" id="3.40.50.10490:FF:000018">
    <property type="entry name" value="Glucose-6-phosphate isomerase"/>
    <property type="match status" value="1"/>
</dbReference>
<dbReference type="Gene3D" id="1.10.1390.10">
    <property type="match status" value="1"/>
</dbReference>
<dbReference type="Gene3D" id="3.40.50.10490">
    <property type="entry name" value="Glucose-6-phosphate isomerase like protein, domain 1"/>
    <property type="match status" value="2"/>
</dbReference>
<dbReference type="HAMAP" id="MF_00473">
    <property type="entry name" value="G6P_isomerase"/>
    <property type="match status" value="1"/>
</dbReference>
<dbReference type="InterPro" id="IPR001672">
    <property type="entry name" value="G6P_Isomerase"/>
</dbReference>
<dbReference type="InterPro" id="IPR023096">
    <property type="entry name" value="G6P_Isomerase_C"/>
</dbReference>
<dbReference type="InterPro" id="IPR018189">
    <property type="entry name" value="Phosphoglucose_isomerase_CS"/>
</dbReference>
<dbReference type="InterPro" id="IPR046348">
    <property type="entry name" value="SIS_dom_sf"/>
</dbReference>
<dbReference type="InterPro" id="IPR035476">
    <property type="entry name" value="SIS_PGI_1"/>
</dbReference>
<dbReference type="InterPro" id="IPR035482">
    <property type="entry name" value="SIS_PGI_2"/>
</dbReference>
<dbReference type="NCBIfam" id="NF001211">
    <property type="entry name" value="PRK00179.1"/>
    <property type="match status" value="1"/>
</dbReference>
<dbReference type="PANTHER" id="PTHR11469">
    <property type="entry name" value="GLUCOSE-6-PHOSPHATE ISOMERASE"/>
    <property type="match status" value="1"/>
</dbReference>
<dbReference type="PANTHER" id="PTHR11469:SF1">
    <property type="entry name" value="GLUCOSE-6-PHOSPHATE ISOMERASE"/>
    <property type="match status" value="1"/>
</dbReference>
<dbReference type="Pfam" id="PF00342">
    <property type="entry name" value="PGI"/>
    <property type="match status" value="1"/>
</dbReference>
<dbReference type="PRINTS" id="PR00662">
    <property type="entry name" value="G6PISOMERASE"/>
</dbReference>
<dbReference type="SUPFAM" id="SSF53697">
    <property type="entry name" value="SIS domain"/>
    <property type="match status" value="1"/>
</dbReference>
<dbReference type="PROSITE" id="PS00765">
    <property type="entry name" value="P_GLUCOSE_ISOMERASE_1"/>
    <property type="match status" value="1"/>
</dbReference>
<dbReference type="PROSITE" id="PS00174">
    <property type="entry name" value="P_GLUCOSE_ISOMERASE_2"/>
    <property type="match status" value="1"/>
</dbReference>
<dbReference type="PROSITE" id="PS51463">
    <property type="entry name" value="P_GLUCOSE_ISOMERASE_3"/>
    <property type="match status" value="1"/>
</dbReference>
<sequence>MTILTQSTTWQALAAHSHQIPHMRELFAGDPARFSNMSLSTCGLFLDYSKNRATPETLNLLQTLAQEAKLDAKIKAMFAGDIINTTEKRAVLHTALRSTAEQSIVAEGQDIVPEVQQTLNKMQQFVTSVTSGQWKGFTGKAITDIVSIGIGGSFLGPKIVSQALRPYWITGLNCHFVANVDGTSISEKLKLLDPETTLFIMSSKSFGTQETLTNTLTAKAWFLAKGGSQSDVAKHFVAVTSNVAKATDFGIDADNIFPMWDWVGGRYSLWSAIGLPIALLIGMDNFRSLLKGAHQMDTHFANAPLAENMPVIMGLFSLWYGNFFNAQSHVVLTYDHYLRGLPAYFQQLDMESNGKSVTLNGTHVDYSTGPVIWGGEGTNGQHAYHQLLHQGNALIPADFIMPLQSHNPIGEHHDQLASNCFGQTQALMQGRTLDEALAELSKSSLSDEEKLLIAKHKVMPGNKPSNTLLMDKLTPETLGALIALYEHRTFVQGAIWDINSFDQWGVELGKSLGNDVLARIGAEQDATALDASSNGLINLYRQGKI</sequence>
<gene>
    <name evidence="1" type="primary">pgi</name>
    <name type="ordered locus">Shewmr7_3050</name>
</gene>